<keyword id="KW-0539">Nucleus</keyword>
<keyword id="KW-1185">Reference proteome</keyword>
<name>SPX2_ORYSJ</name>
<feature type="chain" id="PRO_0000398349" description="SPX domain-containing protein 2">
    <location>
        <begin position="1"/>
        <end position="280"/>
    </location>
</feature>
<feature type="domain" description="SPX" evidence="1">
    <location>
        <begin position="1"/>
        <end position="162"/>
    </location>
</feature>
<feature type="region of interest" description="Disordered" evidence="2">
    <location>
        <begin position="191"/>
        <end position="244"/>
    </location>
</feature>
<feature type="region of interest" description="Disordered" evidence="2">
    <location>
        <begin position="257"/>
        <end position="280"/>
    </location>
</feature>
<protein>
    <recommendedName>
        <fullName evidence="8">SPX domain-containing protein 2</fullName>
    </recommendedName>
    <alternativeName>
        <fullName evidence="8">Protein SPX DOMAIN GENE 2</fullName>
        <shortName evidence="8">OsSPX2</shortName>
    </alternativeName>
</protein>
<accession>Q6Z784</accession>
<accession>A0A0P0VG28</accession>
<accession>A3A498</accession>
<gene>
    <name evidence="8" type="primary">SPX2</name>
    <name evidence="9" type="ordered locus">Os02g0202200</name>
    <name evidence="9" type="ordered locus">LOC_Os02g10780</name>
    <name evidence="11" type="ORF">OsJ_05799</name>
    <name evidence="10" type="ORF">P0419A09.34</name>
</gene>
<organism>
    <name type="scientific">Oryza sativa subsp. japonica</name>
    <name type="common">Rice</name>
    <dbReference type="NCBI Taxonomy" id="39947"/>
    <lineage>
        <taxon>Eukaryota</taxon>
        <taxon>Viridiplantae</taxon>
        <taxon>Streptophyta</taxon>
        <taxon>Embryophyta</taxon>
        <taxon>Tracheophyta</taxon>
        <taxon>Spermatophyta</taxon>
        <taxon>Magnoliopsida</taxon>
        <taxon>Liliopsida</taxon>
        <taxon>Poales</taxon>
        <taxon>Poaceae</taxon>
        <taxon>BOP clade</taxon>
        <taxon>Oryzoideae</taxon>
        <taxon>Oryzeae</taxon>
        <taxon>Oryzinae</taxon>
        <taxon>Oryza</taxon>
        <taxon>Oryza sativa</taxon>
    </lineage>
</organism>
<reference key="1">
    <citation type="journal article" date="2005" name="Nature">
        <title>The map-based sequence of the rice genome.</title>
        <authorList>
            <consortium name="International rice genome sequencing project (IRGSP)"/>
        </authorList>
    </citation>
    <scope>NUCLEOTIDE SEQUENCE [LARGE SCALE GENOMIC DNA]</scope>
    <source>
        <strain>cv. Nipponbare</strain>
    </source>
</reference>
<reference key="2">
    <citation type="journal article" date="2008" name="Nucleic Acids Res.">
        <title>The rice annotation project database (RAP-DB): 2008 update.</title>
        <authorList>
            <consortium name="The rice annotation project (RAP)"/>
        </authorList>
    </citation>
    <scope>GENOME REANNOTATION</scope>
    <source>
        <strain>cv. Nipponbare</strain>
    </source>
</reference>
<reference key="3">
    <citation type="journal article" date="2013" name="Rice">
        <title>Improvement of the Oryza sativa Nipponbare reference genome using next generation sequence and optical map data.</title>
        <authorList>
            <person name="Kawahara Y."/>
            <person name="de la Bastide M."/>
            <person name="Hamilton J.P."/>
            <person name="Kanamori H."/>
            <person name="McCombie W.R."/>
            <person name="Ouyang S."/>
            <person name="Schwartz D.C."/>
            <person name="Tanaka T."/>
            <person name="Wu J."/>
            <person name="Zhou S."/>
            <person name="Childs K.L."/>
            <person name="Davidson R.M."/>
            <person name="Lin H."/>
            <person name="Quesada-Ocampo L."/>
            <person name="Vaillancourt B."/>
            <person name="Sakai H."/>
            <person name="Lee S.S."/>
            <person name="Kim J."/>
            <person name="Numa H."/>
            <person name="Itoh T."/>
            <person name="Buell C.R."/>
            <person name="Matsumoto T."/>
        </authorList>
    </citation>
    <scope>GENOME REANNOTATION</scope>
    <source>
        <strain>cv. Nipponbare</strain>
    </source>
</reference>
<reference key="4">
    <citation type="journal article" date="2005" name="PLoS Biol.">
        <title>The genomes of Oryza sativa: a history of duplications.</title>
        <authorList>
            <person name="Yu J."/>
            <person name="Wang J."/>
            <person name="Lin W."/>
            <person name="Li S."/>
            <person name="Li H."/>
            <person name="Zhou J."/>
            <person name="Ni P."/>
            <person name="Dong W."/>
            <person name="Hu S."/>
            <person name="Zeng C."/>
            <person name="Zhang J."/>
            <person name="Zhang Y."/>
            <person name="Li R."/>
            <person name="Xu Z."/>
            <person name="Li S."/>
            <person name="Li X."/>
            <person name="Zheng H."/>
            <person name="Cong L."/>
            <person name="Lin L."/>
            <person name="Yin J."/>
            <person name="Geng J."/>
            <person name="Li G."/>
            <person name="Shi J."/>
            <person name="Liu J."/>
            <person name="Lv H."/>
            <person name="Li J."/>
            <person name="Wang J."/>
            <person name="Deng Y."/>
            <person name="Ran L."/>
            <person name="Shi X."/>
            <person name="Wang X."/>
            <person name="Wu Q."/>
            <person name="Li C."/>
            <person name="Ren X."/>
            <person name="Wang J."/>
            <person name="Wang X."/>
            <person name="Li D."/>
            <person name="Liu D."/>
            <person name="Zhang X."/>
            <person name="Ji Z."/>
            <person name="Zhao W."/>
            <person name="Sun Y."/>
            <person name="Zhang Z."/>
            <person name="Bao J."/>
            <person name="Han Y."/>
            <person name="Dong L."/>
            <person name="Ji J."/>
            <person name="Chen P."/>
            <person name="Wu S."/>
            <person name="Liu J."/>
            <person name="Xiao Y."/>
            <person name="Bu D."/>
            <person name="Tan J."/>
            <person name="Yang L."/>
            <person name="Ye C."/>
            <person name="Zhang J."/>
            <person name="Xu J."/>
            <person name="Zhou Y."/>
            <person name="Yu Y."/>
            <person name="Zhang B."/>
            <person name="Zhuang S."/>
            <person name="Wei H."/>
            <person name="Liu B."/>
            <person name="Lei M."/>
            <person name="Yu H."/>
            <person name="Li Y."/>
            <person name="Xu H."/>
            <person name="Wei S."/>
            <person name="He X."/>
            <person name="Fang L."/>
            <person name="Zhang Z."/>
            <person name="Zhang Y."/>
            <person name="Huang X."/>
            <person name="Su Z."/>
            <person name="Tong W."/>
            <person name="Li J."/>
            <person name="Tong Z."/>
            <person name="Li S."/>
            <person name="Ye J."/>
            <person name="Wang L."/>
            <person name="Fang L."/>
            <person name="Lei T."/>
            <person name="Chen C.-S."/>
            <person name="Chen H.-C."/>
            <person name="Xu Z."/>
            <person name="Li H."/>
            <person name="Huang H."/>
            <person name="Zhang F."/>
            <person name="Xu H."/>
            <person name="Li N."/>
            <person name="Zhao C."/>
            <person name="Li S."/>
            <person name="Dong L."/>
            <person name="Huang Y."/>
            <person name="Li L."/>
            <person name="Xi Y."/>
            <person name="Qi Q."/>
            <person name="Li W."/>
            <person name="Zhang B."/>
            <person name="Hu W."/>
            <person name="Zhang Y."/>
            <person name="Tian X."/>
            <person name="Jiao Y."/>
            <person name="Liang X."/>
            <person name="Jin J."/>
            <person name="Gao L."/>
            <person name="Zheng W."/>
            <person name="Hao B."/>
            <person name="Liu S.-M."/>
            <person name="Wang W."/>
            <person name="Yuan L."/>
            <person name="Cao M."/>
            <person name="McDermott J."/>
            <person name="Samudrala R."/>
            <person name="Wang J."/>
            <person name="Wong G.K.-S."/>
            <person name="Yang H."/>
        </authorList>
    </citation>
    <scope>NUCLEOTIDE SEQUENCE [LARGE SCALE GENOMIC DNA]</scope>
    <source>
        <strain>cv. Nipponbare</strain>
    </source>
</reference>
<reference key="5">
    <citation type="journal article" date="2003" name="Science">
        <title>Collection, mapping, and annotation of over 28,000 cDNA clones from japonica rice.</title>
        <authorList>
            <consortium name="The rice full-length cDNA consortium"/>
        </authorList>
    </citation>
    <scope>NUCLEOTIDE SEQUENCE [LARGE SCALE MRNA]</scope>
    <source>
        <strain>cv. Nipponbare</strain>
    </source>
</reference>
<reference key="6">
    <citation type="journal article" date="2009" name="J. Integr. Plant Biol.">
        <title>Regulation of OsSPX1 and OsSPX3 on expression of OsSPX domain genes and Pi-starvation signaling in rice.</title>
        <authorList>
            <person name="Wang Z."/>
            <person name="Hu H."/>
            <person name="Huang H."/>
            <person name="Duan K."/>
            <person name="Wu Z."/>
            <person name="Wu P."/>
        </authorList>
    </citation>
    <scope>TISSUE SPECIFICITY</scope>
    <scope>INDUCTION BY PHOSPHATE</scope>
    <scope>SUBCELLULAR LOCATION</scope>
</reference>
<reference key="7">
    <citation type="journal article" date="2009" name="Plant Biotechnol. J.">
        <title>Increased expression of OsSPX1 enhances cold/subfreezing tolerance in tobacco and Arabidopsis thaliana.</title>
        <authorList>
            <person name="Zhao L."/>
            <person name="Liu F."/>
            <person name="Xu W."/>
            <person name="Di C."/>
            <person name="Zhou S."/>
            <person name="Xue Y."/>
            <person name="Yu J."/>
            <person name="Su Z."/>
        </authorList>
    </citation>
    <scope>GENE FAMILY</scope>
    <scope>NOMENCLATURE</scope>
    <scope>INDUCTION BY COLD</scope>
</reference>
<reference key="8">
    <citation type="journal article" date="2014" name="Proc. Natl. Acad. Sci. U.S.A.">
        <title>Rice SPX1 and SPX2 inhibit phosphate starvation responses through interacting with PHR2 in a phosphate-dependent manner.</title>
        <authorList>
            <person name="Wang Z."/>
            <person name="Ruan W."/>
            <person name="Shi J."/>
            <person name="Zhang L."/>
            <person name="Xiang D."/>
            <person name="Yang C."/>
            <person name="Li C."/>
            <person name="Wu Z."/>
            <person name="Liu Y."/>
            <person name="Yu Y."/>
            <person name="Shou H."/>
            <person name="Mo X."/>
            <person name="Mao C."/>
            <person name="Wu P."/>
        </authorList>
    </citation>
    <scope>FUNCTION</scope>
    <scope>INTERACTION WITH PHR2</scope>
    <scope>SUBCELLULAR LOCATION</scope>
    <scope>INDUCTION BY PHR2</scope>
    <scope>DOMAIN</scope>
</reference>
<reference key="9">
    <citation type="journal article" date="2018" name="Plant Cell">
        <title>An SPX-RLI1 module regulates leaf inclination in response to phosphate availability in rice.</title>
        <authorList>
            <person name="Ruan W."/>
            <person name="Guo M."/>
            <person name="Xu L."/>
            <person name="Wang X."/>
            <person name="Zhao H."/>
            <person name="Wang J."/>
            <person name="Yi K."/>
        </authorList>
    </citation>
    <scope>FUNCTION</scope>
    <scope>DISRUPTION PHENOTYPE</scope>
    <scope>INDUCTION BY PHOSPHATE DEFICIENCY</scope>
    <scope>TISSUE SPECIFICITY</scope>
    <source>
        <strain>cv. Nipponbare</strain>
    </source>
</reference>
<reference key="10">
    <citation type="journal article" date="2022" name="Plant Cell">
        <title>Alternative splicing of REGULATOR OF LEAF INCLINATION 1 modulates phosphate starvation signaling and plant growth.</title>
        <authorList>
            <person name="Guo M."/>
            <person name="Zhang Y."/>
            <person name="Jia X."/>
            <person name="Wang X."/>
            <person name="Zhang Y."/>
            <person name="Liu J."/>
            <person name="Yang Q."/>
            <person name="Ruan W."/>
            <person name="Yi K."/>
        </authorList>
    </citation>
    <scope>INTERACTION WITH PHR2 AND RLI1</scope>
    <source>
        <strain>cv. Nipponbare</strain>
    </source>
</reference>
<sequence length="280" mass="30955">MKFGKSLSSQIVEMQPEWRDNFLSYKDLKKRLNLISGGAAGERASKRRRVGGATAVTVTAAAAGGMTLEQAGFVGLLDAELDKFNFFFLEKEEEYVIKQKELRERKMASAEEVMRVRKEIVDLHGEMVLLENYSALNYTGLVKILKKYDKRTGSMIRLPFVQKVLQQPFFTTDLLYKLVKECEEMLDQLMPTNEHSVASEDGKDDSEGEEKGSKPSSSSSANGGAVPGEAEAEDERSTDMKSTVTAALRALREIRSGSSTVSVFSLPPLHGSNGQDEPGR</sequence>
<proteinExistence type="evidence at protein level"/>
<comment type="function">
    <text evidence="5 6">Inhibits PHR2 DNA-binding activity via a phosphate (Pi)-dependent protein interaction (PubMed:25271318). Together with SPX1, plays a negative role in the regulation of leaf inclination by preventing RLI1 transcription factor activity in Pi depleted conditions (PubMed:29610209).</text>
</comment>
<comment type="subunit">
    <text evidence="5 7">Interacts (via SPX domain) with PHR2 (via C-terminus) (PubMed:25271318, PubMed:35640569). Interacts with RLI1 in the nucleus to prevents its positive regulation of leaf inclination during phosphate (Pi) starvation (PubMed:35640569).</text>
</comment>
<comment type="subcellular location">
    <subcellularLocation>
        <location evidence="4 5">Nucleus</location>
    </subcellularLocation>
</comment>
<comment type="tissue specificity">
    <text evidence="4 6">Predominantly expressed in roots, leaves and seeds (PubMed:19566645). Localized in leaves lamina joints (PubMed:29610209).</text>
</comment>
<comment type="induction">
    <text evidence="3 4 5 6">Up-regulated under phosphate (Pi) starvation in lamina joint cells (PubMed:19566645, PubMed:29610209). Up-regulated during cold stress (PubMed:19508276). Up-regulated by the transcription factor PHR2 (PubMed:25271318).</text>
</comment>
<comment type="domain">
    <text evidence="5">The SPX domain is sufficient for inhibition of PHR2 binding to DNA.</text>
</comment>
<comment type="disruption phenotype">
    <text evidence="6">Slightly increased angles of leaf inclination due to longer lamina joint with greater lengths of both adaxial and abaxial sclerenchyma cells (PubMed:29610209). The double mutant spx1 spx2 has abnormally inclinated leaves (PubMed:29610209). Altered leaf inclination phenotypes of the rli1-1 single mutant are suppressed in the triple mutant spx1 spx2 rli1-1 (PubMed:29610209).</text>
</comment>
<comment type="miscellaneous">
    <text evidence="5">SPX1 and SPX2 have redundant functions in repressing the activity of PHR2.</text>
</comment>
<comment type="sequence caution" evidence="9">
    <conflict type="erroneous gene model prediction">
        <sequence resource="EMBL-CDS" id="EAZ22137"/>
    </conflict>
</comment>
<dbReference type="EMBL" id="AP004869">
    <property type="protein sequence ID" value="BAD15861.1"/>
    <property type="molecule type" value="Genomic_DNA"/>
</dbReference>
<dbReference type="EMBL" id="AP008208">
    <property type="protein sequence ID" value="BAF08142.1"/>
    <property type="molecule type" value="Genomic_DNA"/>
</dbReference>
<dbReference type="EMBL" id="AP014958">
    <property type="protein sequence ID" value="BAS77525.1"/>
    <property type="molecule type" value="Genomic_DNA"/>
</dbReference>
<dbReference type="EMBL" id="CM000139">
    <property type="protein sequence ID" value="EAZ22137.1"/>
    <property type="status" value="ALT_SEQ"/>
    <property type="molecule type" value="Genomic_DNA"/>
</dbReference>
<dbReference type="EMBL" id="AK107245">
    <property type="protein sequence ID" value="BAG98008.1"/>
    <property type="molecule type" value="mRNA"/>
</dbReference>
<dbReference type="RefSeq" id="XP_015626019.1">
    <property type="nucleotide sequence ID" value="XM_015770533.1"/>
</dbReference>
<dbReference type="SMR" id="Q6Z784"/>
<dbReference type="FunCoup" id="Q6Z784">
    <property type="interactions" value="1"/>
</dbReference>
<dbReference type="STRING" id="39947.Q6Z784"/>
<dbReference type="PaxDb" id="39947-Q6Z784"/>
<dbReference type="EnsemblPlants" id="Os02t0202200-01">
    <property type="protein sequence ID" value="Os02t0202200-01"/>
    <property type="gene ID" value="Os02g0202200"/>
</dbReference>
<dbReference type="Gramene" id="Os02t0202200-01">
    <property type="protein sequence ID" value="Os02t0202200-01"/>
    <property type="gene ID" value="Os02g0202200"/>
</dbReference>
<dbReference type="KEGG" id="dosa:Os02g0202200"/>
<dbReference type="eggNOG" id="KOG1161">
    <property type="taxonomic scope" value="Eukaryota"/>
</dbReference>
<dbReference type="HOGENOM" id="CLU_057600_1_1_1"/>
<dbReference type="InParanoid" id="Q6Z784"/>
<dbReference type="OMA" id="CATPRDI"/>
<dbReference type="OrthoDB" id="6493944at2759"/>
<dbReference type="Proteomes" id="UP000000763">
    <property type="component" value="Chromosome 2"/>
</dbReference>
<dbReference type="Proteomes" id="UP000007752">
    <property type="component" value="Chromosome 2"/>
</dbReference>
<dbReference type="Proteomes" id="UP000059680">
    <property type="component" value="Chromosome 2"/>
</dbReference>
<dbReference type="GO" id="GO:0005634">
    <property type="term" value="C:nucleus"/>
    <property type="evidence" value="ECO:0000314"/>
    <property type="project" value="UniProtKB"/>
</dbReference>
<dbReference type="GO" id="GO:0070417">
    <property type="term" value="P:cellular response to cold"/>
    <property type="evidence" value="ECO:0000270"/>
    <property type="project" value="UniProtKB"/>
</dbReference>
<dbReference type="GO" id="GO:0016036">
    <property type="term" value="P:cellular response to phosphate starvation"/>
    <property type="evidence" value="ECO:0000270"/>
    <property type="project" value="UniProtKB"/>
</dbReference>
<dbReference type="GO" id="GO:0051511">
    <property type="term" value="P:negative regulation of unidimensional cell growth"/>
    <property type="evidence" value="ECO:0000315"/>
    <property type="project" value="UniProtKB"/>
</dbReference>
<dbReference type="GO" id="GO:2000024">
    <property type="term" value="P:regulation of leaf development"/>
    <property type="evidence" value="ECO:0000315"/>
    <property type="project" value="UniProtKB"/>
</dbReference>
<dbReference type="CDD" id="cd14481">
    <property type="entry name" value="SPX_AtSPX1_like"/>
    <property type="match status" value="1"/>
</dbReference>
<dbReference type="InterPro" id="IPR004331">
    <property type="entry name" value="SPX_dom"/>
</dbReference>
<dbReference type="InterPro" id="IPR031142">
    <property type="entry name" value="SPX_prot"/>
</dbReference>
<dbReference type="PANTHER" id="PTHR45978:SF5">
    <property type="entry name" value="SPX DOMAIN-CONTAINING PROTEIN 2"/>
    <property type="match status" value="1"/>
</dbReference>
<dbReference type="PANTHER" id="PTHR45978">
    <property type="entry name" value="SPX DOMAIN-CONTAINING PROTEIN 3"/>
    <property type="match status" value="1"/>
</dbReference>
<dbReference type="Pfam" id="PF03105">
    <property type="entry name" value="SPX"/>
    <property type="match status" value="2"/>
</dbReference>
<dbReference type="PROSITE" id="PS51382">
    <property type="entry name" value="SPX"/>
    <property type="match status" value="1"/>
</dbReference>
<evidence type="ECO:0000255" key="1">
    <source>
        <dbReference type="PROSITE-ProRule" id="PRU00714"/>
    </source>
</evidence>
<evidence type="ECO:0000256" key="2">
    <source>
        <dbReference type="SAM" id="MobiDB-lite"/>
    </source>
</evidence>
<evidence type="ECO:0000269" key="3">
    <source>
    </source>
</evidence>
<evidence type="ECO:0000269" key="4">
    <source>
    </source>
</evidence>
<evidence type="ECO:0000269" key="5">
    <source>
    </source>
</evidence>
<evidence type="ECO:0000269" key="6">
    <source>
    </source>
</evidence>
<evidence type="ECO:0000269" key="7">
    <source>
    </source>
</evidence>
<evidence type="ECO:0000303" key="8">
    <source>
    </source>
</evidence>
<evidence type="ECO:0000305" key="9"/>
<evidence type="ECO:0000312" key="10">
    <source>
        <dbReference type="EMBL" id="BAD15861.1"/>
    </source>
</evidence>
<evidence type="ECO:0000312" key="11">
    <source>
        <dbReference type="EMBL" id="EAZ22137.1"/>
    </source>
</evidence>